<dbReference type="EMBL" id="AE006468">
    <property type="protein sequence ID" value="AAL23212.1"/>
    <property type="molecule type" value="Genomic_DNA"/>
</dbReference>
<dbReference type="RefSeq" id="NP_463253.1">
    <property type="nucleotide sequence ID" value="NC_003197.2"/>
</dbReference>
<dbReference type="RefSeq" id="WP_001519453.1">
    <property type="nucleotide sequence ID" value="NC_003197.2"/>
</dbReference>
<dbReference type="SMR" id="Q8ZK82"/>
<dbReference type="STRING" id="99287.STM4392"/>
<dbReference type="PaxDb" id="99287-STM4392"/>
<dbReference type="GeneID" id="1255918"/>
<dbReference type="GeneID" id="66758616"/>
<dbReference type="KEGG" id="stm:STM4392"/>
<dbReference type="PATRIC" id="fig|99287.12.peg.4617"/>
<dbReference type="HOGENOM" id="CLU_166075_0_0_6"/>
<dbReference type="OMA" id="CQMPVII"/>
<dbReference type="PhylomeDB" id="Q8ZK82"/>
<dbReference type="BioCyc" id="SENT99287:STM4392-MONOMER"/>
<dbReference type="Proteomes" id="UP000001014">
    <property type="component" value="Chromosome"/>
</dbReference>
<dbReference type="GO" id="GO:1990077">
    <property type="term" value="C:primosome complex"/>
    <property type="evidence" value="ECO:0007669"/>
    <property type="project" value="UniProtKB-KW"/>
</dbReference>
<dbReference type="GO" id="GO:0003697">
    <property type="term" value="F:single-stranded DNA binding"/>
    <property type="evidence" value="ECO:0007669"/>
    <property type="project" value="UniProtKB-UniRule"/>
</dbReference>
<dbReference type="GO" id="GO:0006269">
    <property type="term" value="P:DNA replication, synthesis of primer"/>
    <property type="evidence" value="ECO:0007669"/>
    <property type="project" value="UniProtKB-KW"/>
</dbReference>
<dbReference type="CDD" id="cd04496">
    <property type="entry name" value="SSB_OBF"/>
    <property type="match status" value="1"/>
</dbReference>
<dbReference type="FunFam" id="2.40.50.140:FF:000077">
    <property type="entry name" value="Primosomal replication protein N"/>
    <property type="match status" value="1"/>
</dbReference>
<dbReference type="Gene3D" id="2.40.50.140">
    <property type="entry name" value="Nucleic acid-binding proteins"/>
    <property type="match status" value="1"/>
</dbReference>
<dbReference type="HAMAP" id="MF_00720">
    <property type="entry name" value="PriB"/>
    <property type="match status" value="1"/>
</dbReference>
<dbReference type="InterPro" id="IPR012340">
    <property type="entry name" value="NA-bd_OB-fold"/>
</dbReference>
<dbReference type="InterPro" id="IPR000424">
    <property type="entry name" value="Primosome_PriB/ssb"/>
</dbReference>
<dbReference type="InterPro" id="IPR023646">
    <property type="entry name" value="Prisomal_replication_PriB"/>
</dbReference>
<dbReference type="NCBIfam" id="TIGR04418">
    <property type="entry name" value="PriB_gamma"/>
    <property type="match status" value="1"/>
</dbReference>
<dbReference type="Pfam" id="PF22657">
    <property type="entry name" value="SSB_1"/>
    <property type="match status" value="1"/>
</dbReference>
<dbReference type="PIRSF" id="PIRSF003135">
    <property type="entry name" value="Primosomal_n"/>
    <property type="match status" value="1"/>
</dbReference>
<dbReference type="SUPFAM" id="SSF50249">
    <property type="entry name" value="Nucleic acid-binding proteins"/>
    <property type="match status" value="1"/>
</dbReference>
<dbReference type="PROSITE" id="PS50935">
    <property type="entry name" value="SSB"/>
    <property type="match status" value="1"/>
</dbReference>
<comment type="function">
    <text evidence="1">Involved in the restart of stalled replication forks, which reloads the replicative helicase on sites other than the origin of replication; the PriA-PriB pathway is the major replication restart pathway. During primosome assembly it facilitates complex formation between PriA and DnaT on DNA; stabilizes PriA on DNA. Stimulates the DNA unwinding activity of PriA helicase.</text>
</comment>
<comment type="subunit">
    <text evidence="1">Homodimer. Interacts with PriA and DnaT. Component of the replication restart primosome. Primosome assembly occurs via a 'hand-off' mechanism. PriA binds to replication forks, subsequently PriB then DnaT bind; DnaT then displaces ssDNA to generate the helicase loading substrate.</text>
</comment>
<comment type="similarity">
    <text evidence="1">Belongs to the PriB family.</text>
</comment>
<protein>
    <recommendedName>
        <fullName evidence="1">Replication restart protein PriB</fullName>
    </recommendedName>
</protein>
<proteinExistence type="inferred from homology"/>
<sequence length="104" mass="11414">MTNRLALSGTVCRAPLRKVSPSGIPHCQFVLEHRSVQEEAGFHRQAWCQMPVIVSGHENQAITHSITVGSRITVQGFISCHKAKNGLSKMVLHAEQIELIDSGD</sequence>
<accession>Q8ZK82</accession>
<evidence type="ECO:0000255" key="1">
    <source>
        <dbReference type="HAMAP-Rule" id="MF_00720"/>
    </source>
</evidence>
<name>PRIB_SALTY</name>
<feature type="chain" id="PRO_0000199061" description="Replication restart protein PriB">
    <location>
        <begin position="1"/>
        <end position="104"/>
    </location>
</feature>
<feature type="domain" description="SSB" evidence="1">
    <location>
        <begin position="1"/>
        <end position="101"/>
    </location>
</feature>
<gene>
    <name evidence="1" type="primary">priB</name>
    <name type="ordered locus">STM4392</name>
</gene>
<reference key="1">
    <citation type="journal article" date="2001" name="Nature">
        <title>Complete genome sequence of Salmonella enterica serovar Typhimurium LT2.</title>
        <authorList>
            <person name="McClelland M."/>
            <person name="Sanderson K.E."/>
            <person name="Spieth J."/>
            <person name="Clifton S.W."/>
            <person name="Latreille P."/>
            <person name="Courtney L."/>
            <person name="Porwollik S."/>
            <person name="Ali J."/>
            <person name="Dante M."/>
            <person name="Du F."/>
            <person name="Hou S."/>
            <person name="Layman D."/>
            <person name="Leonard S."/>
            <person name="Nguyen C."/>
            <person name="Scott K."/>
            <person name="Holmes A."/>
            <person name="Grewal N."/>
            <person name="Mulvaney E."/>
            <person name="Ryan E."/>
            <person name="Sun H."/>
            <person name="Florea L."/>
            <person name="Miller W."/>
            <person name="Stoneking T."/>
            <person name="Nhan M."/>
            <person name="Waterston R."/>
            <person name="Wilson R.K."/>
        </authorList>
    </citation>
    <scope>NUCLEOTIDE SEQUENCE [LARGE SCALE GENOMIC DNA]</scope>
    <source>
        <strain>LT2 / SGSC1412 / ATCC 700720</strain>
    </source>
</reference>
<keyword id="KW-0235">DNA replication</keyword>
<keyword id="KW-0238">DNA-binding</keyword>
<keyword id="KW-0639">Primosome</keyword>
<keyword id="KW-1185">Reference proteome</keyword>
<organism>
    <name type="scientific">Salmonella typhimurium (strain LT2 / SGSC1412 / ATCC 700720)</name>
    <dbReference type="NCBI Taxonomy" id="99287"/>
    <lineage>
        <taxon>Bacteria</taxon>
        <taxon>Pseudomonadati</taxon>
        <taxon>Pseudomonadota</taxon>
        <taxon>Gammaproteobacteria</taxon>
        <taxon>Enterobacterales</taxon>
        <taxon>Enterobacteriaceae</taxon>
        <taxon>Salmonella</taxon>
    </lineage>
</organism>